<protein>
    <recommendedName>
        <fullName evidence="1">tRNA 2-selenouridine synthase</fullName>
        <ecNumber evidence="1">2.9.1.3</ecNumber>
    </recommendedName>
</protein>
<gene>
    <name evidence="1" type="primary">selU</name>
    <name type="ordered locus">PSEEN0990</name>
</gene>
<dbReference type="EC" id="2.9.1.3" evidence="1"/>
<dbReference type="EMBL" id="CT573326">
    <property type="protein sequence ID" value="CAK13895.1"/>
    <property type="molecule type" value="Genomic_DNA"/>
</dbReference>
<dbReference type="RefSeq" id="WP_011532320.1">
    <property type="nucleotide sequence ID" value="NC_008027.1"/>
</dbReference>
<dbReference type="SMR" id="Q1IEL0"/>
<dbReference type="STRING" id="384676.PSEEN0990"/>
<dbReference type="GeneID" id="32804286"/>
<dbReference type="KEGG" id="pen:PSEEN0990"/>
<dbReference type="eggNOG" id="COG2603">
    <property type="taxonomic scope" value="Bacteria"/>
</dbReference>
<dbReference type="HOGENOM" id="CLU_043456_1_0_6"/>
<dbReference type="OrthoDB" id="9808735at2"/>
<dbReference type="Proteomes" id="UP000000658">
    <property type="component" value="Chromosome"/>
</dbReference>
<dbReference type="GO" id="GO:0016765">
    <property type="term" value="F:transferase activity, transferring alkyl or aryl (other than methyl) groups"/>
    <property type="evidence" value="ECO:0007669"/>
    <property type="project" value="UniProtKB-UniRule"/>
</dbReference>
<dbReference type="GO" id="GO:0043828">
    <property type="term" value="F:tRNA 2-selenouridine synthase activity"/>
    <property type="evidence" value="ECO:0007669"/>
    <property type="project" value="UniProtKB-EC"/>
</dbReference>
<dbReference type="GO" id="GO:0002098">
    <property type="term" value="P:tRNA wobble uridine modification"/>
    <property type="evidence" value="ECO:0007669"/>
    <property type="project" value="UniProtKB-UniRule"/>
</dbReference>
<dbReference type="CDD" id="cd01520">
    <property type="entry name" value="RHOD_YbbB"/>
    <property type="match status" value="1"/>
</dbReference>
<dbReference type="Gene3D" id="3.40.250.10">
    <property type="entry name" value="Rhodanese-like domain"/>
    <property type="match status" value="1"/>
</dbReference>
<dbReference type="HAMAP" id="MF_01622">
    <property type="entry name" value="tRNA_sel_U_synth"/>
    <property type="match status" value="1"/>
</dbReference>
<dbReference type="InterPro" id="IPR001763">
    <property type="entry name" value="Rhodanese-like_dom"/>
</dbReference>
<dbReference type="InterPro" id="IPR036873">
    <property type="entry name" value="Rhodanese-like_dom_sf"/>
</dbReference>
<dbReference type="InterPro" id="IPR017582">
    <property type="entry name" value="SelU"/>
</dbReference>
<dbReference type="NCBIfam" id="NF008750">
    <property type="entry name" value="PRK11784.1-2"/>
    <property type="match status" value="1"/>
</dbReference>
<dbReference type="NCBIfam" id="NF008751">
    <property type="entry name" value="PRK11784.1-3"/>
    <property type="match status" value="1"/>
</dbReference>
<dbReference type="NCBIfam" id="TIGR03167">
    <property type="entry name" value="tRNA_sel_U_synt"/>
    <property type="match status" value="1"/>
</dbReference>
<dbReference type="PANTHER" id="PTHR30401">
    <property type="entry name" value="TRNA 2-SELENOURIDINE SYNTHASE"/>
    <property type="match status" value="1"/>
</dbReference>
<dbReference type="PANTHER" id="PTHR30401:SF0">
    <property type="entry name" value="TRNA 2-SELENOURIDINE SYNTHASE"/>
    <property type="match status" value="1"/>
</dbReference>
<dbReference type="SUPFAM" id="SSF52821">
    <property type="entry name" value="Rhodanese/Cell cycle control phosphatase"/>
    <property type="match status" value="1"/>
</dbReference>
<dbReference type="PROSITE" id="PS50206">
    <property type="entry name" value="RHODANESE_3"/>
    <property type="match status" value="1"/>
</dbReference>
<reference key="1">
    <citation type="journal article" date="2006" name="Nat. Biotechnol.">
        <title>Complete genome sequence of the entomopathogenic and metabolically versatile soil bacterium Pseudomonas entomophila.</title>
        <authorList>
            <person name="Vodovar N."/>
            <person name="Vallenet D."/>
            <person name="Cruveiller S."/>
            <person name="Rouy Z."/>
            <person name="Barbe V."/>
            <person name="Acosta C."/>
            <person name="Cattolico L."/>
            <person name="Jubin C."/>
            <person name="Lajus A."/>
            <person name="Segurens B."/>
            <person name="Vacherie B."/>
            <person name="Wincker P."/>
            <person name="Weissenbach J."/>
            <person name="Lemaitre B."/>
            <person name="Medigue C."/>
            <person name="Boccard F."/>
        </authorList>
    </citation>
    <scope>NUCLEOTIDE SEQUENCE [LARGE SCALE GENOMIC DNA]</scope>
    <source>
        <strain>L48</strain>
    </source>
</reference>
<comment type="function">
    <text evidence="1">Involved in the post-transcriptional modification of the uridine at the wobble position (U34) of tRNA(Lys), tRNA(Glu) and tRNA(Gln). Catalyzes the conversion of 2-thiouridine (S2U-RNA) to 2-selenouridine (Se2U-RNA). Acts in a two-step process involving geranylation of 2-thiouridine (S2U) to S-geranyl-2-thiouridine (geS2U) and subsequent selenation of the latter derivative to 2-selenouridine (Se2U) in the tRNA chain.</text>
</comment>
<comment type="catalytic activity">
    <reaction evidence="1">
        <text>5-methylaminomethyl-2-thiouridine(34) in tRNA + selenophosphate + (2E)-geranyl diphosphate + H2O + H(+) = 5-methylaminomethyl-2-selenouridine(34) in tRNA + (2E)-thiogeraniol + phosphate + diphosphate</text>
        <dbReference type="Rhea" id="RHEA:42716"/>
        <dbReference type="Rhea" id="RHEA-COMP:10195"/>
        <dbReference type="Rhea" id="RHEA-COMP:10196"/>
        <dbReference type="ChEBI" id="CHEBI:15377"/>
        <dbReference type="ChEBI" id="CHEBI:15378"/>
        <dbReference type="ChEBI" id="CHEBI:16144"/>
        <dbReference type="ChEBI" id="CHEBI:33019"/>
        <dbReference type="ChEBI" id="CHEBI:43474"/>
        <dbReference type="ChEBI" id="CHEBI:58057"/>
        <dbReference type="ChEBI" id="CHEBI:74455"/>
        <dbReference type="ChEBI" id="CHEBI:82743"/>
        <dbReference type="ChEBI" id="CHEBI:143703"/>
        <dbReference type="EC" id="2.9.1.3"/>
    </reaction>
    <physiologicalReaction direction="left-to-right" evidence="1">
        <dbReference type="Rhea" id="RHEA:42717"/>
    </physiologicalReaction>
</comment>
<comment type="catalytic activity">
    <reaction evidence="1">
        <text>5-methylaminomethyl-2-thiouridine(34) in tRNA + (2E)-geranyl diphosphate = 5-methylaminomethyl-S-(2E)-geranyl-thiouridine(34) in tRNA + diphosphate</text>
        <dbReference type="Rhea" id="RHEA:14085"/>
        <dbReference type="Rhea" id="RHEA-COMP:10195"/>
        <dbReference type="Rhea" id="RHEA-COMP:14654"/>
        <dbReference type="ChEBI" id="CHEBI:33019"/>
        <dbReference type="ChEBI" id="CHEBI:58057"/>
        <dbReference type="ChEBI" id="CHEBI:74455"/>
        <dbReference type="ChEBI" id="CHEBI:140632"/>
    </reaction>
    <physiologicalReaction direction="left-to-right" evidence="1">
        <dbReference type="Rhea" id="RHEA:14086"/>
    </physiologicalReaction>
</comment>
<comment type="catalytic activity">
    <reaction evidence="1">
        <text>5-methylaminomethyl-S-(2E)-geranyl-thiouridine(34) in tRNA + selenophosphate + H(+) = 5-methylaminomethyl-2-(Se-phospho)selenouridine(34) in tRNA + (2E)-thiogeraniol</text>
        <dbReference type="Rhea" id="RHEA:60172"/>
        <dbReference type="Rhea" id="RHEA-COMP:14654"/>
        <dbReference type="Rhea" id="RHEA-COMP:15523"/>
        <dbReference type="ChEBI" id="CHEBI:15378"/>
        <dbReference type="ChEBI" id="CHEBI:16144"/>
        <dbReference type="ChEBI" id="CHEBI:140632"/>
        <dbReference type="ChEBI" id="CHEBI:143702"/>
        <dbReference type="ChEBI" id="CHEBI:143703"/>
    </reaction>
    <physiologicalReaction direction="left-to-right" evidence="1">
        <dbReference type="Rhea" id="RHEA:60173"/>
    </physiologicalReaction>
</comment>
<comment type="catalytic activity">
    <reaction evidence="1">
        <text>5-methylaminomethyl-2-(Se-phospho)selenouridine(34) in tRNA + H2O = 5-methylaminomethyl-2-selenouridine(34) in tRNA + phosphate</text>
        <dbReference type="Rhea" id="RHEA:60176"/>
        <dbReference type="Rhea" id="RHEA-COMP:10196"/>
        <dbReference type="Rhea" id="RHEA-COMP:15523"/>
        <dbReference type="ChEBI" id="CHEBI:15377"/>
        <dbReference type="ChEBI" id="CHEBI:43474"/>
        <dbReference type="ChEBI" id="CHEBI:82743"/>
        <dbReference type="ChEBI" id="CHEBI:143702"/>
    </reaction>
    <physiologicalReaction direction="left-to-right" evidence="1">
        <dbReference type="Rhea" id="RHEA:60177"/>
    </physiologicalReaction>
</comment>
<comment type="subunit">
    <text evidence="1">Monomer.</text>
</comment>
<comment type="similarity">
    <text evidence="1">Belongs to the SelU family.</text>
</comment>
<evidence type="ECO:0000255" key="1">
    <source>
        <dbReference type="HAMAP-Rule" id="MF_01622"/>
    </source>
</evidence>
<accession>Q1IEL0</accession>
<proteinExistence type="inferred from homology"/>
<sequence>MRPDCTDFNTLFLDDVPMMDMRAPIEFTKGAFPGVVNLPLMNDQERQKVGTCFKQQGQSAAIALGHQLVNGALKQQRLEAWAAFAQAHPDGYLYCFRGGLRSQIVQGWLKEAGIQYPKVVGGYKAMRTFLLDTTQQAVEQCDFVLLGGLTGTGKTDVLQQLDNVLDLEGHANHRGSSFGKRATAQPAQIDFENGLAIDMLKKRARGIGQFVLEDEGRIVGSCTVPLGLYQGMQRYPLVWLEDAFDNRVERILRDYVTNLCAEFVAVHGEEDGRRLFAERMRQSMANIYKRLGGERFQRLSELLGQALDEQLRSGDVSLHRGWIEGLLKEYYDPMYAYQREAKAGRIEFAGDGVEVREYLKARARRQHRVDL</sequence>
<organism>
    <name type="scientific">Pseudomonas entomophila (strain L48)</name>
    <dbReference type="NCBI Taxonomy" id="384676"/>
    <lineage>
        <taxon>Bacteria</taxon>
        <taxon>Pseudomonadati</taxon>
        <taxon>Pseudomonadota</taxon>
        <taxon>Gammaproteobacteria</taxon>
        <taxon>Pseudomonadales</taxon>
        <taxon>Pseudomonadaceae</taxon>
        <taxon>Pseudomonas</taxon>
    </lineage>
</organism>
<keyword id="KW-0711">Selenium</keyword>
<keyword id="KW-0808">Transferase</keyword>
<feature type="chain" id="PRO_0000292704" description="tRNA 2-selenouridine synthase">
    <location>
        <begin position="1"/>
        <end position="371"/>
    </location>
</feature>
<feature type="domain" description="Rhodanese" evidence="1">
    <location>
        <begin position="12"/>
        <end position="135"/>
    </location>
</feature>
<feature type="active site" description="S-selanylcysteine intermediate" evidence="1">
    <location>
        <position position="95"/>
    </location>
</feature>
<name>SELU_PSEE4</name>